<feature type="chain" id="PRO_0000121787" description="tRNA pseudouridine synthase B">
    <location>
        <begin position="1"/>
        <end position="233"/>
    </location>
</feature>
<feature type="active site" description="Nucleophile" evidence="1">
    <location>
        <position position="48"/>
    </location>
</feature>
<reference key="1">
    <citation type="journal article" date="2004" name="Proc. Natl. Acad. Sci. U.S.A.">
        <title>Genomic analysis of Bacteroides fragilis reveals extensive DNA inversions regulating cell surface adaptation.</title>
        <authorList>
            <person name="Kuwahara T."/>
            <person name="Yamashita A."/>
            <person name="Hirakawa H."/>
            <person name="Nakayama H."/>
            <person name="Toh H."/>
            <person name="Okada N."/>
            <person name="Kuhara S."/>
            <person name="Hattori M."/>
            <person name="Hayashi T."/>
            <person name="Ohnishi Y."/>
        </authorList>
    </citation>
    <scope>NUCLEOTIDE SEQUENCE [LARGE SCALE GENOMIC DNA]</scope>
    <source>
        <strain>YCH46</strain>
    </source>
</reference>
<dbReference type="EC" id="5.4.99.25" evidence="1"/>
<dbReference type="EMBL" id="AP006841">
    <property type="protein sequence ID" value="BAD46806.1"/>
    <property type="molecule type" value="Genomic_DNA"/>
</dbReference>
<dbReference type="RefSeq" id="WP_005783635.1">
    <property type="nucleotide sequence ID" value="NZ_UYXF01000012.1"/>
</dbReference>
<dbReference type="RefSeq" id="YP_097340.1">
    <property type="nucleotide sequence ID" value="NC_006347.1"/>
</dbReference>
<dbReference type="SMR" id="Q650L8"/>
<dbReference type="STRING" id="295405.BF0057"/>
<dbReference type="GeneID" id="60368018"/>
<dbReference type="KEGG" id="bfr:BF0057"/>
<dbReference type="PATRIC" id="fig|295405.11.peg.95"/>
<dbReference type="HOGENOM" id="CLU_032087_2_0_10"/>
<dbReference type="OrthoDB" id="9802309at2"/>
<dbReference type="Proteomes" id="UP000002197">
    <property type="component" value="Chromosome"/>
</dbReference>
<dbReference type="GO" id="GO:0003723">
    <property type="term" value="F:RNA binding"/>
    <property type="evidence" value="ECO:0007669"/>
    <property type="project" value="InterPro"/>
</dbReference>
<dbReference type="GO" id="GO:0160148">
    <property type="term" value="F:tRNA pseudouridine(55) synthase activity"/>
    <property type="evidence" value="ECO:0007669"/>
    <property type="project" value="UniProtKB-EC"/>
</dbReference>
<dbReference type="GO" id="GO:1990481">
    <property type="term" value="P:mRNA pseudouridine synthesis"/>
    <property type="evidence" value="ECO:0007669"/>
    <property type="project" value="TreeGrafter"/>
</dbReference>
<dbReference type="GO" id="GO:0031119">
    <property type="term" value="P:tRNA pseudouridine synthesis"/>
    <property type="evidence" value="ECO:0007669"/>
    <property type="project" value="UniProtKB-UniRule"/>
</dbReference>
<dbReference type="CDD" id="cd02573">
    <property type="entry name" value="PseudoU_synth_EcTruB"/>
    <property type="match status" value="1"/>
</dbReference>
<dbReference type="Gene3D" id="3.30.2350.10">
    <property type="entry name" value="Pseudouridine synthase"/>
    <property type="match status" value="1"/>
</dbReference>
<dbReference type="HAMAP" id="MF_01080">
    <property type="entry name" value="TruB_bact"/>
    <property type="match status" value="1"/>
</dbReference>
<dbReference type="InterPro" id="IPR020103">
    <property type="entry name" value="PsdUridine_synth_cat_dom_sf"/>
</dbReference>
<dbReference type="InterPro" id="IPR002501">
    <property type="entry name" value="PsdUridine_synth_N"/>
</dbReference>
<dbReference type="InterPro" id="IPR014780">
    <property type="entry name" value="tRNA_psdUridine_synth_TruB"/>
</dbReference>
<dbReference type="InterPro" id="IPR032819">
    <property type="entry name" value="TruB_C"/>
</dbReference>
<dbReference type="NCBIfam" id="TIGR00431">
    <property type="entry name" value="TruB"/>
    <property type="match status" value="1"/>
</dbReference>
<dbReference type="PANTHER" id="PTHR13767:SF2">
    <property type="entry name" value="PSEUDOURIDYLATE SYNTHASE TRUB1"/>
    <property type="match status" value="1"/>
</dbReference>
<dbReference type="PANTHER" id="PTHR13767">
    <property type="entry name" value="TRNA-PSEUDOURIDINE SYNTHASE"/>
    <property type="match status" value="1"/>
</dbReference>
<dbReference type="Pfam" id="PF16198">
    <property type="entry name" value="TruB_C_2"/>
    <property type="match status" value="1"/>
</dbReference>
<dbReference type="Pfam" id="PF01509">
    <property type="entry name" value="TruB_N"/>
    <property type="match status" value="1"/>
</dbReference>
<dbReference type="SUPFAM" id="SSF55120">
    <property type="entry name" value="Pseudouridine synthase"/>
    <property type="match status" value="1"/>
</dbReference>
<evidence type="ECO:0000255" key="1">
    <source>
        <dbReference type="HAMAP-Rule" id="MF_01080"/>
    </source>
</evidence>
<proteinExistence type="inferred from homology"/>
<protein>
    <recommendedName>
        <fullName evidence="1">tRNA pseudouridine synthase B</fullName>
        <ecNumber evidence="1">5.4.99.25</ecNumber>
    </recommendedName>
    <alternativeName>
        <fullName evidence="1">tRNA pseudouridine(55) synthase</fullName>
        <shortName evidence="1">Psi55 synthase</shortName>
    </alternativeName>
    <alternativeName>
        <fullName evidence="1">tRNA pseudouridylate synthase</fullName>
    </alternativeName>
    <alternativeName>
        <fullName evidence="1">tRNA-uridine isomerase</fullName>
    </alternativeName>
</protein>
<comment type="function">
    <text evidence="1">Responsible for synthesis of pseudouridine from uracil-55 in the psi GC loop of transfer RNAs.</text>
</comment>
<comment type="catalytic activity">
    <reaction evidence="1">
        <text>uridine(55) in tRNA = pseudouridine(55) in tRNA</text>
        <dbReference type="Rhea" id="RHEA:42532"/>
        <dbReference type="Rhea" id="RHEA-COMP:10101"/>
        <dbReference type="Rhea" id="RHEA-COMP:10102"/>
        <dbReference type="ChEBI" id="CHEBI:65314"/>
        <dbReference type="ChEBI" id="CHEBI:65315"/>
        <dbReference type="EC" id="5.4.99.25"/>
    </reaction>
</comment>
<comment type="similarity">
    <text evidence="1">Belongs to the pseudouridine synthase TruB family. Type 1 subfamily.</text>
</comment>
<name>TRUB_BACFR</name>
<gene>
    <name evidence="1" type="primary">truB</name>
    <name type="ordered locus">BF0057</name>
</gene>
<sequence length="233" mass="26247">MNFKEGEVLYFNKPLGWTSFKVVGHARYHMCRRMKVKKLKVGHAGTLDPLATGVMIVCTGKATKRIEEFQYHTKEYVATIQLGATTPSYDLEHEIDATYPTEHITRELVEKTLKTFVGEIQQIPPAFSACKVDGARAYDLARKGQEVELKPKLLVIDEIELLECNLPEIKIRVVCSKGTYIRALARDIGEALQSGAHLTGLIRTRVGDVKLEQCLDPAKFAEWIDQQDVEISD</sequence>
<accession>Q650L8</accession>
<organism>
    <name type="scientific">Bacteroides fragilis (strain YCH46)</name>
    <dbReference type="NCBI Taxonomy" id="295405"/>
    <lineage>
        <taxon>Bacteria</taxon>
        <taxon>Pseudomonadati</taxon>
        <taxon>Bacteroidota</taxon>
        <taxon>Bacteroidia</taxon>
        <taxon>Bacteroidales</taxon>
        <taxon>Bacteroidaceae</taxon>
        <taxon>Bacteroides</taxon>
    </lineage>
</organism>
<keyword id="KW-0413">Isomerase</keyword>
<keyword id="KW-0819">tRNA processing</keyword>